<keyword id="KW-0051">Antiviral defense</keyword>
<keyword id="KW-0963">Cytoplasm</keyword>
<keyword id="KW-0342">GTP-binding</keyword>
<keyword id="KW-0391">Immunity</keyword>
<keyword id="KW-0399">Innate immunity</keyword>
<keyword id="KW-0547">Nucleotide-binding</keyword>
<keyword id="KW-0539">Nucleus</keyword>
<keyword id="KW-1185">Reference proteome</keyword>
<gene>
    <name type="primary">MX2</name>
</gene>
<protein>
    <recommendedName>
        <fullName>Interferon-induced GTP-binding protein Mx2</fullName>
    </recommendedName>
    <alternativeName>
        <fullName>Myxovirus resistance protein 2</fullName>
    </alternativeName>
</protein>
<dbReference type="EMBL" id="AB259856">
    <property type="protein sequence ID" value="BAF76735.1"/>
    <property type="molecule type" value="Genomic_DNA"/>
</dbReference>
<dbReference type="SMR" id="A7VK00"/>
<dbReference type="FunCoup" id="A7VK00">
    <property type="interactions" value="37"/>
</dbReference>
<dbReference type="STRING" id="9823.ENSSSCP00000055951"/>
<dbReference type="PaxDb" id="9823-ENSSSCP00000012857"/>
<dbReference type="PeptideAtlas" id="A7VK00"/>
<dbReference type="Ensembl" id="ENSSSCT00015015781.1">
    <property type="protein sequence ID" value="ENSSSCP00015006145.1"/>
    <property type="gene ID" value="ENSSSCG00015011655.1"/>
</dbReference>
<dbReference type="Ensembl" id="ENSSSCT00015015968.1">
    <property type="protein sequence ID" value="ENSSSCP00015006216.1"/>
    <property type="gene ID" value="ENSSSCG00015011655.1"/>
</dbReference>
<dbReference type="Ensembl" id="ENSSSCT00025072779.1">
    <property type="protein sequence ID" value="ENSSSCP00025031534.1"/>
    <property type="gene ID" value="ENSSSCG00025052147.1"/>
</dbReference>
<dbReference type="Ensembl" id="ENSSSCT00030057799.1">
    <property type="protein sequence ID" value="ENSSSCP00030026302.1"/>
    <property type="gene ID" value="ENSSSCG00030041391.1"/>
</dbReference>
<dbReference type="Ensembl" id="ENSSSCT00035110112.1">
    <property type="protein sequence ID" value="ENSSSCP00035047932.1"/>
    <property type="gene ID" value="ENSSSCG00035080268.1"/>
</dbReference>
<dbReference type="Ensembl" id="ENSSSCT00045047167.1">
    <property type="protein sequence ID" value="ENSSSCP00045032749.1"/>
    <property type="gene ID" value="ENSSSCG00045027374.1"/>
</dbReference>
<dbReference type="Ensembl" id="ENSSSCT00050072275.1">
    <property type="protein sequence ID" value="ENSSSCP00050031078.1"/>
    <property type="gene ID" value="ENSSSCG00050053075.1"/>
</dbReference>
<dbReference type="Ensembl" id="ENSSSCT00055012853.1">
    <property type="protein sequence ID" value="ENSSSCP00055010108.1"/>
    <property type="gene ID" value="ENSSSCG00055006455.1"/>
</dbReference>
<dbReference type="Ensembl" id="ENSSSCT00065021442.1">
    <property type="protein sequence ID" value="ENSSSCP00065008683.1"/>
    <property type="gene ID" value="ENSSSCG00065016129.1"/>
</dbReference>
<dbReference type="Ensembl" id="ENSSSCT00070018946.1">
    <property type="protein sequence ID" value="ENSSSCP00070015739.1"/>
    <property type="gene ID" value="ENSSSCG00070009638.1"/>
</dbReference>
<dbReference type="Ensembl" id="ENSSSCT00070018958.1">
    <property type="protein sequence ID" value="ENSSSCP00070015751.1"/>
    <property type="gene ID" value="ENSSSCG00070009638.1"/>
</dbReference>
<dbReference type="Ensembl" id="ENSSSCT00090049442">
    <property type="protein sequence ID" value="ENSSSCP00090030619"/>
    <property type="gene ID" value="ENSSSCG00090027988"/>
</dbReference>
<dbReference type="Ensembl" id="ENSSSCT00115024168">
    <property type="protein sequence ID" value="ENSSSCP00115022911"/>
    <property type="gene ID" value="ENSSSCG00115013910"/>
</dbReference>
<dbReference type="eggNOG" id="KOG0446">
    <property type="taxonomic scope" value="Eukaryota"/>
</dbReference>
<dbReference type="InParanoid" id="A7VK00"/>
<dbReference type="OMA" id="EYISEWH"/>
<dbReference type="Reactome" id="R-SSC-1169408">
    <property type="pathway name" value="ISG15 antiviral mechanism"/>
</dbReference>
<dbReference type="Proteomes" id="UP000008227">
    <property type="component" value="Unplaced"/>
</dbReference>
<dbReference type="Proteomes" id="UP000314985">
    <property type="component" value="Chromosome 13"/>
</dbReference>
<dbReference type="Proteomes" id="UP000694570">
    <property type="component" value="Unplaced"/>
</dbReference>
<dbReference type="Proteomes" id="UP000694571">
    <property type="component" value="Unplaced"/>
</dbReference>
<dbReference type="Proteomes" id="UP000694720">
    <property type="component" value="Unplaced"/>
</dbReference>
<dbReference type="Proteomes" id="UP000694722">
    <property type="component" value="Unplaced"/>
</dbReference>
<dbReference type="Proteomes" id="UP000694723">
    <property type="component" value="Unplaced"/>
</dbReference>
<dbReference type="Proteomes" id="UP000694724">
    <property type="component" value="Unplaced"/>
</dbReference>
<dbReference type="Proteomes" id="UP000694725">
    <property type="component" value="Unplaced"/>
</dbReference>
<dbReference type="Proteomes" id="UP000694726">
    <property type="component" value="Unplaced"/>
</dbReference>
<dbReference type="Proteomes" id="UP000694727">
    <property type="component" value="Unplaced"/>
</dbReference>
<dbReference type="Proteomes" id="UP000694728">
    <property type="component" value="Unplaced"/>
</dbReference>
<dbReference type="Bgee" id="ENSSSCG00000012076">
    <property type="expression patterns" value="Expressed in penis and 41 other cell types or tissues"/>
</dbReference>
<dbReference type="ExpressionAtlas" id="A7VK00">
    <property type="expression patterns" value="baseline and differential"/>
</dbReference>
<dbReference type="GO" id="GO:0005737">
    <property type="term" value="C:cytoplasm"/>
    <property type="evidence" value="ECO:0000318"/>
    <property type="project" value="GO_Central"/>
</dbReference>
<dbReference type="GO" id="GO:0005874">
    <property type="term" value="C:microtubule"/>
    <property type="evidence" value="ECO:0000318"/>
    <property type="project" value="GO_Central"/>
</dbReference>
<dbReference type="GO" id="GO:0005634">
    <property type="term" value="C:nucleus"/>
    <property type="evidence" value="ECO:0000314"/>
    <property type="project" value="UniProtKB"/>
</dbReference>
<dbReference type="GO" id="GO:0005886">
    <property type="term" value="C:plasma membrane"/>
    <property type="evidence" value="ECO:0000318"/>
    <property type="project" value="GO_Central"/>
</dbReference>
<dbReference type="GO" id="GO:0098793">
    <property type="term" value="C:presynapse"/>
    <property type="evidence" value="ECO:0007669"/>
    <property type="project" value="GOC"/>
</dbReference>
<dbReference type="GO" id="GO:0045202">
    <property type="term" value="C:synapse"/>
    <property type="evidence" value="ECO:0000318"/>
    <property type="project" value="GO_Central"/>
</dbReference>
<dbReference type="GO" id="GO:0005525">
    <property type="term" value="F:GTP binding"/>
    <property type="evidence" value="ECO:0007669"/>
    <property type="project" value="UniProtKB-KW"/>
</dbReference>
<dbReference type="GO" id="GO:0003924">
    <property type="term" value="F:GTPase activity"/>
    <property type="evidence" value="ECO:0000318"/>
    <property type="project" value="GO_Central"/>
</dbReference>
<dbReference type="GO" id="GO:0008017">
    <property type="term" value="F:microtubule binding"/>
    <property type="evidence" value="ECO:0000318"/>
    <property type="project" value="GO_Central"/>
</dbReference>
<dbReference type="GO" id="GO:0051607">
    <property type="term" value="P:defense response to virus"/>
    <property type="evidence" value="ECO:0000318"/>
    <property type="project" value="GO_Central"/>
</dbReference>
<dbReference type="GO" id="GO:0045087">
    <property type="term" value="P:innate immune response"/>
    <property type="evidence" value="ECO:0007669"/>
    <property type="project" value="UniProtKB-KW"/>
</dbReference>
<dbReference type="GO" id="GO:0031623">
    <property type="term" value="P:receptor internalization"/>
    <property type="evidence" value="ECO:0000318"/>
    <property type="project" value="GO_Central"/>
</dbReference>
<dbReference type="GO" id="GO:0009615">
    <property type="term" value="P:response to virus"/>
    <property type="evidence" value="ECO:0000314"/>
    <property type="project" value="UniProtKB"/>
</dbReference>
<dbReference type="GO" id="GO:0016185">
    <property type="term" value="P:synaptic vesicle budding from presynaptic endocytic zone membrane"/>
    <property type="evidence" value="ECO:0000318"/>
    <property type="project" value="GO_Central"/>
</dbReference>
<dbReference type="CDD" id="cd08771">
    <property type="entry name" value="DLP_1"/>
    <property type="match status" value="1"/>
</dbReference>
<dbReference type="FunFam" id="1.20.120.1240:FF:000007">
    <property type="entry name" value="Interferon-induced GTP-binding protein Mx1"/>
    <property type="match status" value="1"/>
</dbReference>
<dbReference type="FunFam" id="3.40.50.300:FF:000621">
    <property type="entry name" value="Interferon-induced GTP-binding protein Mx1"/>
    <property type="match status" value="1"/>
</dbReference>
<dbReference type="Gene3D" id="1.20.120.1240">
    <property type="entry name" value="Dynamin, middle domain"/>
    <property type="match status" value="1"/>
</dbReference>
<dbReference type="Gene3D" id="3.40.50.300">
    <property type="entry name" value="P-loop containing nucleotide triphosphate hydrolases"/>
    <property type="match status" value="1"/>
</dbReference>
<dbReference type="InterPro" id="IPR022812">
    <property type="entry name" value="Dynamin"/>
</dbReference>
<dbReference type="InterPro" id="IPR001401">
    <property type="entry name" value="Dynamin_GTPase"/>
</dbReference>
<dbReference type="InterPro" id="IPR019762">
    <property type="entry name" value="Dynamin_GTPase_CS"/>
</dbReference>
<dbReference type="InterPro" id="IPR045063">
    <property type="entry name" value="Dynamin_N"/>
</dbReference>
<dbReference type="InterPro" id="IPR000375">
    <property type="entry name" value="Dynamin_stalk"/>
</dbReference>
<dbReference type="InterPro" id="IPR030381">
    <property type="entry name" value="G_DYNAMIN_dom"/>
</dbReference>
<dbReference type="InterPro" id="IPR003130">
    <property type="entry name" value="GED"/>
</dbReference>
<dbReference type="InterPro" id="IPR020850">
    <property type="entry name" value="GED_dom"/>
</dbReference>
<dbReference type="InterPro" id="IPR027417">
    <property type="entry name" value="P-loop_NTPase"/>
</dbReference>
<dbReference type="PANTHER" id="PTHR11566">
    <property type="entry name" value="DYNAMIN"/>
    <property type="match status" value="1"/>
</dbReference>
<dbReference type="PANTHER" id="PTHR11566:SF46">
    <property type="entry name" value="INTERFERON-INDUCED GTP-BINDING PROTEIN MX2"/>
    <property type="match status" value="1"/>
</dbReference>
<dbReference type="Pfam" id="PF01031">
    <property type="entry name" value="Dynamin_M"/>
    <property type="match status" value="1"/>
</dbReference>
<dbReference type="Pfam" id="PF00350">
    <property type="entry name" value="Dynamin_N"/>
    <property type="match status" value="1"/>
</dbReference>
<dbReference type="Pfam" id="PF02212">
    <property type="entry name" value="GED"/>
    <property type="match status" value="1"/>
</dbReference>
<dbReference type="PRINTS" id="PR00195">
    <property type="entry name" value="DYNAMIN"/>
</dbReference>
<dbReference type="SMART" id="SM00053">
    <property type="entry name" value="DYNc"/>
    <property type="match status" value="1"/>
</dbReference>
<dbReference type="SMART" id="SM00302">
    <property type="entry name" value="GED"/>
    <property type="match status" value="1"/>
</dbReference>
<dbReference type="SUPFAM" id="SSF52540">
    <property type="entry name" value="P-loop containing nucleoside triphosphate hydrolases"/>
    <property type="match status" value="1"/>
</dbReference>
<dbReference type="PROSITE" id="PS00410">
    <property type="entry name" value="G_DYNAMIN_1"/>
    <property type="match status" value="1"/>
</dbReference>
<dbReference type="PROSITE" id="PS51718">
    <property type="entry name" value="G_DYNAMIN_2"/>
    <property type="match status" value="1"/>
</dbReference>
<dbReference type="PROSITE" id="PS51388">
    <property type="entry name" value="GED"/>
    <property type="match status" value="1"/>
</dbReference>
<proteinExistence type="evidence at transcript level"/>
<feature type="chain" id="PRO_0000319959" description="Interferon-induced GTP-binding protein Mx2">
    <location>
        <begin position="1"/>
        <end position="711"/>
    </location>
</feature>
<feature type="domain" description="Dynamin-type G" evidence="4">
    <location>
        <begin position="112"/>
        <end position="383"/>
    </location>
</feature>
<feature type="domain" description="GED" evidence="3">
    <location>
        <begin position="619"/>
        <end position="710"/>
    </location>
</feature>
<feature type="region of interest" description="Disordered" evidence="5">
    <location>
        <begin position="1"/>
        <end position="26"/>
    </location>
</feature>
<feature type="region of interest" description="Disordered" evidence="5">
    <location>
        <begin position="62"/>
        <end position="88"/>
    </location>
</feature>
<feature type="region of interest" description="G1 motif" evidence="4">
    <location>
        <begin position="122"/>
        <end position="129"/>
    </location>
</feature>
<feature type="region of interest" description="G2 motif" evidence="4">
    <location>
        <begin position="147"/>
        <end position="149"/>
    </location>
</feature>
<feature type="region of interest" description="G3 motif" evidence="4">
    <location>
        <begin position="221"/>
        <end position="224"/>
    </location>
</feature>
<feature type="region of interest" description="G4 motif" evidence="4">
    <location>
        <begin position="290"/>
        <end position="293"/>
    </location>
</feature>
<feature type="region of interest" description="G5 motif" evidence="4">
    <location>
        <begin position="322"/>
        <end position="325"/>
    </location>
</feature>
<feature type="compositionally biased region" description="Low complexity" evidence="5">
    <location>
        <begin position="66"/>
        <end position="82"/>
    </location>
</feature>
<feature type="binding site" evidence="2">
    <location>
        <begin position="122"/>
        <end position="129"/>
    </location>
    <ligand>
        <name>GTP</name>
        <dbReference type="ChEBI" id="CHEBI:37565"/>
    </ligand>
</feature>
<feature type="binding site" evidence="2">
    <location>
        <begin position="221"/>
        <end position="225"/>
    </location>
    <ligand>
        <name>GTP</name>
        <dbReference type="ChEBI" id="CHEBI:37565"/>
    </ligand>
</feature>
<feature type="binding site" evidence="2">
    <location>
        <begin position="290"/>
        <end position="293"/>
    </location>
    <ligand>
        <name>GTP</name>
        <dbReference type="ChEBI" id="CHEBI:37565"/>
    </ligand>
</feature>
<name>MX2_PIG</name>
<organism>
    <name type="scientific">Sus scrofa</name>
    <name type="common">Pig</name>
    <dbReference type="NCBI Taxonomy" id="9823"/>
    <lineage>
        <taxon>Eukaryota</taxon>
        <taxon>Metazoa</taxon>
        <taxon>Chordata</taxon>
        <taxon>Craniata</taxon>
        <taxon>Vertebrata</taxon>
        <taxon>Euteleostomi</taxon>
        <taxon>Mammalia</taxon>
        <taxon>Eutheria</taxon>
        <taxon>Laurasiatheria</taxon>
        <taxon>Artiodactyla</taxon>
        <taxon>Suina</taxon>
        <taxon>Suidae</taxon>
        <taxon>Sus</taxon>
    </lineage>
</organism>
<sequence>MPKPRMSWPYQRHRQASSPPHPHKEMNFFPQQPLPLGAGPGQMTFPLNWQMGGKDLTKGLNMLTLSPQQPGGKSGQQTSKGPENNLYSPFEEKVRPCIDLIDSLRALGVEQDLALPTIAVIGDQSSGKSSVLEALSGVPLPRGSGIITRCPLALRLKKKECPWQGRISYRKVELQLQDPSQVEREIRKAQDAIAGSGVGISHELISLEVTSPEVPDLTLIDLPGITRVAVGNQPQDIGLQIKALIRKYIQEQQTINLVVVPCNVDIATTEALRMAQEVDPEGDRTIGILTKPDLVDTGAEKVVLNVMQNLTYHLKKGYMIVKCRGQQEILNKLSLAEATKREIAFFHSHPHFRILLEEGKATVPRLAERLTVELIGHISKSLPLLFSQIKEIHQSATEELRLCGASVPSNDADKMFFLIEKIKVFNQDIENLAEGEEIVKEKEARLYNKIREEFKSWIVTLDCNSKKVKNIIHEEVSKYDRQYRGKELMGFVSYKTFESIVRQYLEELVDPALGMLQTVVEIVRQTFSDTAQKNFGEFSNLNQTTQNKVDSIAARAAERAEGLIRLQFRMEQLVFCQDDIYRVDLKAVREELFNPVAEHPQSLQLRLPFVNGPSPVSSITEIGVHVNAYFMGTSQRLANQIPFIIQYCVLQESRDHLQKAMMQMLQGREQYSWLLQEESHTSAKRHFLKEKIHRLAEARHTLSKFAQSLQG</sequence>
<evidence type="ECO:0000250" key="1"/>
<evidence type="ECO:0000255" key="2"/>
<evidence type="ECO:0000255" key="3">
    <source>
        <dbReference type="PROSITE-ProRule" id="PRU00720"/>
    </source>
</evidence>
<evidence type="ECO:0000255" key="4">
    <source>
        <dbReference type="PROSITE-ProRule" id="PRU01055"/>
    </source>
</evidence>
<evidence type="ECO:0000256" key="5">
    <source>
        <dbReference type="SAM" id="MobiDB-lite"/>
    </source>
</evidence>
<evidence type="ECO:0000269" key="6">
    <source>
    </source>
</evidence>
<evidence type="ECO:0000269" key="7">
    <source>
    </source>
</evidence>
<reference key="1">
    <citation type="journal article" date="2009" name="Mol. Immunol.">
        <title>Molecular cloning and characterization of porcine Mx2 gene.</title>
        <authorList>
            <person name="Morozumi T."/>
            <person name="Naito T."/>
            <person name="Lan P.D."/>
            <person name="Nakajima E."/>
            <person name="Mitsuhashi T."/>
            <person name="Mikawa S."/>
            <person name="Hayashi T."/>
            <person name="Awata T."/>
            <person name="Uenishi H."/>
            <person name="Nagata K."/>
            <person name="Watanabe T."/>
            <person name="Hamasima N."/>
        </authorList>
    </citation>
    <scope>NUCLEOTIDE SEQUENCE [GENOMIC DNA]</scope>
    <scope>FUNCTION</scope>
    <scope>SUBCELLULAR LOCATION</scope>
    <scope>TISSUE SPECIFICITY</scope>
</reference>
<reference key="2">
    <citation type="journal article" date="2007" name="Microbes Infect.">
        <title>The Mx GTPase family of interferon-induced antiviral proteins.</title>
        <authorList>
            <person name="Haller O."/>
            <person name="Stertz S."/>
            <person name="Kochs G."/>
        </authorList>
    </citation>
    <scope>REVIEW</scope>
    <scope>INDUCTION</scope>
</reference>
<accession>A7VK00</accession>
<comment type="function">
    <text evidence="7">Interferon-induced dynamin-like GTPase with antiviral activity against influenza virus A (FLUAV).</text>
</comment>
<comment type="subcellular location">
    <subcellularLocation>
        <location evidence="1">Cytoplasm</location>
    </subcellularLocation>
    <subcellularLocation>
        <location evidence="7">Nucleus</location>
    </subcellularLocation>
</comment>
<comment type="tissue specificity">
    <text evidence="7">Ubiquitous.</text>
</comment>
<comment type="induction">
    <text evidence="6">By type I and type III interferons.</text>
</comment>
<comment type="similarity">
    <text evidence="4">Belongs to the TRAFAC class dynamin-like GTPase superfamily. Dynamin/Fzo/YdjA family.</text>
</comment>